<keyword id="KW-0150">Chloroplast</keyword>
<keyword id="KW-0934">Plastid</keyword>
<keyword id="KW-0687">Ribonucleoprotein</keyword>
<keyword id="KW-0689">Ribosomal protein</keyword>
<keyword id="KW-0694">RNA-binding</keyword>
<keyword id="KW-0699">rRNA-binding</keyword>
<gene>
    <name evidence="1" type="primary">rps11</name>
</gene>
<sequence length="129" mass="13995">MIKQKKKIIKITKKKFPKGIVHIKTTYNNVLVSVSDPKGNVIAWSSSGACGFKSSKKATPLATKTTTAIAVKKAIEQGLQKVEINISGPGTGRETALKCVQSLGLRISCIRDVTPLPHNGCRPSKRRRI</sequence>
<reference key="1">
    <citation type="journal article" date="1982" name="J. Biol. Chem.">
        <title>Euglena gracilis chloroplast transfer RNA transcription units. II. Nucleotide sequence analysis of a tRNAVal-tRNAAsn-tRNAArg-tRNALeu gene cluster.</title>
        <authorList>
            <person name="Orozco E.M."/>
            <person name="Hallick R.B."/>
        </authorList>
    </citation>
    <scope>NUCLEOTIDE SEQUENCE [GENOMIC DNA]</scope>
    <source>
        <strain>Z / UTEX 753</strain>
    </source>
</reference>
<reference key="2">
    <citation type="journal article" date="1991" name="Mol. Gen. Genet.">
        <title>Intercistronic group III introns in polycistronic ribosomal protein operons of chloroplasts.</title>
        <authorList>
            <person name="Stevenson J.K."/>
            <person name="Drager R.G."/>
            <person name="Copertino D.W."/>
            <person name="Christopher D.A."/>
            <person name="Jenkins K.P."/>
            <person name="Yepiz-Plascencia G."/>
            <person name="Hallick R.B."/>
        </authorList>
    </citation>
    <scope>NUCLEOTIDE SEQUENCE [GENOMIC DNA]</scope>
    <source>
        <strain>Z / UTEX 753</strain>
    </source>
</reference>
<reference key="3">
    <citation type="journal article" date="1993" name="Nucleic Acids Res.">
        <title>Complete sequence of Euglena gracilis chloroplast DNA.</title>
        <authorList>
            <person name="Hallick R.B."/>
            <person name="Hong L."/>
            <person name="Drager R.G."/>
            <person name="Favreau M.R."/>
            <person name="Monfort A."/>
            <person name="Orsat B."/>
            <person name="Spielmann A."/>
            <person name="Stutz E."/>
        </authorList>
    </citation>
    <scope>NUCLEOTIDE SEQUENCE [LARGE SCALE GENOMIC DNA]</scope>
    <source>
        <strain>Z / UTEX 753</strain>
    </source>
</reference>
<geneLocation type="chloroplast"/>
<comment type="subunit">
    <text evidence="1">Part of the 30S ribosomal subunit.</text>
</comment>
<comment type="subcellular location">
    <subcellularLocation>
        <location>Plastid</location>
        <location>Chloroplast</location>
    </subcellularLocation>
</comment>
<comment type="similarity">
    <text evidence="1">Belongs to the universal ribosomal protein uS11 family.</text>
</comment>
<evidence type="ECO:0000255" key="1">
    <source>
        <dbReference type="HAMAP-Rule" id="MF_01310"/>
    </source>
</evidence>
<evidence type="ECO:0000305" key="2"/>
<accession>P27419</accession>
<name>RR11_EUGGR</name>
<protein>
    <recommendedName>
        <fullName evidence="1">Small ribosomal subunit protein uS11c</fullName>
    </recommendedName>
    <alternativeName>
        <fullName evidence="2">30S ribosomal protein S11, chloroplastic</fullName>
    </alternativeName>
</protein>
<feature type="chain" id="PRO_0000123301" description="Small ribosomal subunit protein uS11c">
    <location>
        <begin position="1"/>
        <end position="129"/>
    </location>
</feature>
<dbReference type="EMBL" id="Z11874">
    <property type="status" value="NOT_ANNOTATED_CDS"/>
    <property type="molecule type" value="Genomic_DNA"/>
</dbReference>
<dbReference type="EMBL" id="M22010">
    <property type="protein sequence ID" value="AAA84229.1"/>
    <property type="molecule type" value="Genomic_DNA"/>
</dbReference>
<dbReference type="EMBL" id="X70810">
    <property type="protein sequence ID" value="CAA50135.1"/>
    <property type="molecule type" value="Genomic_DNA"/>
</dbReference>
<dbReference type="PIR" id="S34920">
    <property type="entry name" value="S34553"/>
</dbReference>
<dbReference type="RefSeq" id="NP_041948.1">
    <property type="nucleotide sequence ID" value="NC_001603.2"/>
</dbReference>
<dbReference type="SMR" id="P27419"/>
<dbReference type="GeneID" id="807494"/>
<dbReference type="GO" id="GO:0009507">
    <property type="term" value="C:chloroplast"/>
    <property type="evidence" value="ECO:0007669"/>
    <property type="project" value="UniProtKB-SubCell"/>
</dbReference>
<dbReference type="GO" id="GO:1990904">
    <property type="term" value="C:ribonucleoprotein complex"/>
    <property type="evidence" value="ECO:0007669"/>
    <property type="project" value="UniProtKB-KW"/>
</dbReference>
<dbReference type="GO" id="GO:0005840">
    <property type="term" value="C:ribosome"/>
    <property type="evidence" value="ECO:0007669"/>
    <property type="project" value="UniProtKB-KW"/>
</dbReference>
<dbReference type="GO" id="GO:0019843">
    <property type="term" value="F:rRNA binding"/>
    <property type="evidence" value="ECO:0007669"/>
    <property type="project" value="UniProtKB-UniRule"/>
</dbReference>
<dbReference type="GO" id="GO:0003735">
    <property type="term" value="F:structural constituent of ribosome"/>
    <property type="evidence" value="ECO:0007669"/>
    <property type="project" value="InterPro"/>
</dbReference>
<dbReference type="GO" id="GO:0006412">
    <property type="term" value="P:translation"/>
    <property type="evidence" value="ECO:0007669"/>
    <property type="project" value="UniProtKB-UniRule"/>
</dbReference>
<dbReference type="Gene3D" id="3.30.420.80">
    <property type="entry name" value="Ribosomal protein S11"/>
    <property type="match status" value="1"/>
</dbReference>
<dbReference type="HAMAP" id="MF_01310">
    <property type="entry name" value="Ribosomal_uS11"/>
    <property type="match status" value="1"/>
</dbReference>
<dbReference type="InterPro" id="IPR001971">
    <property type="entry name" value="Ribosomal_uS11"/>
</dbReference>
<dbReference type="InterPro" id="IPR019981">
    <property type="entry name" value="Ribosomal_uS11_bac-type"/>
</dbReference>
<dbReference type="InterPro" id="IPR018102">
    <property type="entry name" value="Ribosomal_uS11_CS"/>
</dbReference>
<dbReference type="InterPro" id="IPR036967">
    <property type="entry name" value="Ribosomal_uS11_sf"/>
</dbReference>
<dbReference type="NCBIfam" id="NF003698">
    <property type="entry name" value="PRK05309.1"/>
    <property type="match status" value="1"/>
</dbReference>
<dbReference type="NCBIfam" id="TIGR03632">
    <property type="entry name" value="uS11_bact"/>
    <property type="match status" value="1"/>
</dbReference>
<dbReference type="PANTHER" id="PTHR11759">
    <property type="entry name" value="40S RIBOSOMAL PROTEIN S14/30S RIBOSOMAL PROTEIN S11"/>
    <property type="match status" value="1"/>
</dbReference>
<dbReference type="Pfam" id="PF00411">
    <property type="entry name" value="Ribosomal_S11"/>
    <property type="match status" value="1"/>
</dbReference>
<dbReference type="PIRSF" id="PIRSF002131">
    <property type="entry name" value="Ribosomal_S11"/>
    <property type="match status" value="1"/>
</dbReference>
<dbReference type="SUPFAM" id="SSF53137">
    <property type="entry name" value="Translational machinery components"/>
    <property type="match status" value="1"/>
</dbReference>
<dbReference type="PROSITE" id="PS00054">
    <property type="entry name" value="RIBOSOMAL_S11"/>
    <property type="match status" value="1"/>
</dbReference>
<proteinExistence type="inferred from homology"/>
<organism>
    <name type="scientific">Euglena gracilis</name>
    <dbReference type="NCBI Taxonomy" id="3039"/>
    <lineage>
        <taxon>Eukaryota</taxon>
        <taxon>Discoba</taxon>
        <taxon>Euglenozoa</taxon>
        <taxon>Euglenida</taxon>
        <taxon>Spirocuta</taxon>
        <taxon>Euglenophyceae</taxon>
        <taxon>Euglenales</taxon>
        <taxon>Euglenaceae</taxon>
        <taxon>Euglena</taxon>
    </lineage>
</organism>